<proteinExistence type="inferred from homology"/>
<accession>A2QID5</accession>
<protein>
    <recommendedName>
        <fullName>Mediator of RNA polymerase II transcription subunit 8</fullName>
    </recommendedName>
    <alternativeName>
        <fullName>Mediator complex subunit 8</fullName>
    </alternativeName>
</protein>
<feature type="chain" id="PRO_0000304536" description="Mediator of RNA polymerase II transcription subunit 8">
    <location>
        <begin position="1"/>
        <end position="269"/>
    </location>
</feature>
<feature type="region of interest" description="Disordered" evidence="2">
    <location>
        <begin position="187"/>
        <end position="217"/>
    </location>
</feature>
<feature type="compositionally biased region" description="Acidic residues" evidence="2">
    <location>
        <begin position="190"/>
        <end position="211"/>
    </location>
</feature>
<organism>
    <name type="scientific">Aspergillus niger (strain ATCC MYA-4892 / CBS 513.88 / FGSC A1513)</name>
    <dbReference type="NCBI Taxonomy" id="425011"/>
    <lineage>
        <taxon>Eukaryota</taxon>
        <taxon>Fungi</taxon>
        <taxon>Dikarya</taxon>
        <taxon>Ascomycota</taxon>
        <taxon>Pezizomycotina</taxon>
        <taxon>Eurotiomycetes</taxon>
        <taxon>Eurotiomycetidae</taxon>
        <taxon>Eurotiales</taxon>
        <taxon>Aspergillaceae</taxon>
        <taxon>Aspergillus</taxon>
        <taxon>Aspergillus subgen. Circumdati</taxon>
    </lineage>
</organism>
<sequence>MSSLNQDQIKTLEQSRQRLIQLTHSLASLITSLNQSDPLPSWTSLQSQATIISNNLLTISDHLSDNRDLLSNIVAYPDASYPSRVPANNVALEQVLRTKLDPRVEDWVARGRRAGAPTTSSDAGAGALGQYQTSSGQRLLSDDAIAELWDWAPVAANEEARKRNWGGNYTLEEREMGIENVVTGLSRVLEDDDEEDESDSEEGEGEADEMEVVGARRRSGAGAGLEFDIAAANTGSGANAGAGAKVVAPVVPLDEILRFMTTGAVPGQR</sequence>
<keyword id="KW-0010">Activator</keyword>
<keyword id="KW-0539">Nucleus</keyword>
<keyword id="KW-1185">Reference proteome</keyword>
<keyword id="KW-0804">Transcription</keyword>
<keyword id="KW-0805">Transcription regulation</keyword>
<gene>
    <name type="primary">med8</name>
    <name type="ORF">An04g03140</name>
</gene>
<name>MED8_ASPNC</name>
<dbReference type="EMBL" id="AM270074">
    <property type="protein sequence ID" value="CAK44630.1"/>
    <property type="molecule type" value="Genomic_DNA"/>
</dbReference>
<dbReference type="SMR" id="A2QID5"/>
<dbReference type="EnsemblFungi" id="CAK44630">
    <property type="protein sequence ID" value="CAK44630"/>
    <property type="gene ID" value="An04g03140"/>
</dbReference>
<dbReference type="VEuPathDB" id="FungiDB:An04g03140"/>
<dbReference type="HOGENOM" id="CLU_074399_1_0_1"/>
<dbReference type="Proteomes" id="UP000006706">
    <property type="component" value="Chromosome 6L"/>
</dbReference>
<dbReference type="GO" id="GO:0070847">
    <property type="term" value="C:core mediator complex"/>
    <property type="evidence" value="ECO:0007669"/>
    <property type="project" value="TreeGrafter"/>
</dbReference>
<dbReference type="GO" id="GO:0016592">
    <property type="term" value="C:mediator complex"/>
    <property type="evidence" value="ECO:0007669"/>
    <property type="project" value="InterPro"/>
</dbReference>
<dbReference type="GO" id="GO:0000978">
    <property type="term" value="F:RNA polymerase II cis-regulatory region sequence-specific DNA binding"/>
    <property type="evidence" value="ECO:0007669"/>
    <property type="project" value="TreeGrafter"/>
</dbReference>
<dbReference type="GO" id="GO:0003712">
    <property type="term" value="F:transcription coregulator activity"/>
    <property type="evidence" value="ECO:0007669"/>
    <property type="project" value="InterPro"/>
</dbReference>
<dbReference type="GO" id="GO:0006357">
    <property type="term" value="P:regulation of transcription by RNA polymerase II"/>
    <property type="evidence" value="ECO:0007669"/>
    <property type="project" value="InterPro"/>
</dbReference>
<dbReference type="FunFam" id="1.20.58.1710:FF:000002">
    <property type="entry name" value="Mediator of RNA polymerase II transcription subunit 8"/>
    <property type="match status" value="1"/>
</dbReference>
<dbReference type="Gene3D" id="1.20.58.1710">
    <property type="match status" value="1"/>
</dbReference>
<dbReference type="Gene3D" id="6.10.250.2610">
    <property type="match status" value="1"/>
</dbReference>
<dbReference type="InterPro" id="IPR019364">
    <property type="entry name" value="Mediatior_Med8_fun/met"/>
</dbReference>
<dbReference type="PANTHER" id="PTHR13074">
    <property type="entry name" value="MEDIATOR OF RNA POLYMERASE II TRANSCRIPTION SUBUNIT 8"/>
    <property type="match status" value="1"/>
</dbReference>
<dbReference type="PANTHER" id="PTHR13074:SF9">
    <property type="entry name" value="MEDIATOR OF RNA POLYMERASE II TRANSCRIPTION SUBUNIT 8"/>
    <property type="match status" value="1"/>
</dbReference>
<dbReference type="Pfam" id="PF10232">
    <property type="entry name" value="Med8"/>
    <property type="match status" value="1"/>
</dbReference>
<comment type="function">
    <text evidence="1">Component of the Mediator complex, a coactivator involved in the regulated transcription of nearly all RNA polymerase II-dependent genes. Mediator functions as a bridge to convey information from gene-specific regulatory proteins to the basal RNA polymerase II transcription machinery. Mediator is recruited to promoters by direct interactions with regulatory proteins and serves as a scaffold for the assembly of a functional preinitiation complex with RNA polymerase II and the general transcription factors (By similarity).</text>
</comment>
<comment type="subunit">
    <text evidence="1">Component of the Mediator complex.</text>
</comment>
<comment type="subcellular location">
    <subcellularLocation>
        <location evidence="3">Nucleus</location>
    </subcellularLocation>
</comment>
<comment type="similarity">
    <text evidence="3">Belongs to the Mediator complex subunit 8 family.</text>
</comment>
<reference key="1">
    <citation type="journal article" date="2007" name="Nat. Biotechnol.">
        <title>Genome sequencing and analysis of the versatile cell factory Aspergillus niger CBS 513.88.</title>
        <authorList>
            <person name="Pel H.J."/>
            <person name="de Winde J.H."/>
            <person name="Archer D.B."/>
            <person name="Dyer P.S."/>
            <person name="Hofmann G."/>
            <person name="Schaap P.J."/>
            <person name="Turner G."/>
            <person name="de Vries R.P."/>
            <person name="Albang R."/>
            <person name="Albermann K."/>
            <person name="Andersen M.R."/>
            <person name="Bendtsen J.D."/>
            <person name="Benen J.A.E."/>
            <person name="van den Berg M."/>
            <person name="Breestraat S."/>
            <person name="Caddick M.X."/>
            <person name="Contreras R."/>
            <person name="Cornell M."/>
            <person name="Coutinho P.M."/>
            <person name="Danchin E.G.J."/>
            <person name="Debets A.J.M."/>
            <person name="Dekker P."/>
            <person name="van Dijck P.W.M."/>
            <person name="van Dijk A."/>
            <person name="Dijkhuizen L."/>
            <person name="Driessen A.J.M."/>
            <person name="d'Enfert C."/>
            <person name="Geysens S."/>
            <person name="Goosen C."/>
            <person name="Groot G.S.P."/>
            <person name="de Groot P.W.J."/>
            <person name="Guillemette T."/>
            <person name="Henrissat B."/>
            <person name="Herweijer M."/>
            <person name="van den Hombergh J.P.T.W."/>
            <person name="van den Hondel C.A.M.J.J."/>
            <person name="van der Heijden R.T.J.M."/>
            <person name="van der Kaaij R.M."/>
            <person name="Klis F.M."/>
            <person name="Kools H.J."/>
            <person name="Kubicek C.P."/>
            <person name="van Kuyk P.A."/>
            <person name="Lauber J."/>
            <person name="Lu X."/>
            <person name="van der Maarel M.J.E.C."/>
            <person name="Meulenberg R."/>
            <person name="Menke H."/>
            <person name="Mortimer M.A."/>
            <person name="Nielsen J."/>
            <person name="Oliver S.G."/>
            <person name="Olsthoorn M."/>
            <person name="Pal K."/>
            <person name="van Peij N.N.M.E."/>
            <person name="Ram A.F.J."/>
            <person name="Rinas U."/>
            <person name="Roubos J.A."/>
            <person name="Sagt C.M.J."/>
            <person name="Schmoll M."/>
            <person name="Sun J."/>
            <person name="Ussery D."/>
            <person name="Varga J."/>
            <person name="Vervecken W."/>
            <person name="van de Vondervoort P.J.J."/>
            <person name="Wedler H."/>
            <person name="Woesten H.A.B."/>
            <person name="Zeng A.-P."/>
            <person name="van Ooyen A.J.J."/>
            <person name="Visser J."/>
            <person name="Stam H."/>
        </authorList>
    </citation>
    <scope>NUCLEOTIDE SEQUENCE [LARGE SCALE GENOMIC DNA]</scope>
    <source>
        <strain>ATCC MYA-4892 / CBS 513.88 / FGSC A1513</strain>
    </source>
</reference>
<evidence type="ECO:0000250" key="1"/>
<evidence type="ECO:0000256" key="2">
    <source>
        <dbReference type="SAM" id="MobiDB-lite"/>
    </source>
</evidence>
<evidence type="ECO:0000305" key="3"/>